<keyword id="KW-0030">Aminoacyl-tRNA synthetase</keyword>
<keyword id="KW-0067">ATP-binding</keyword>
<keyword id="KW-0963">Cytoplasm</keyword>
<keyword id="KW-0436">Ligase</keyword>
<keyword id="KW-0547">Nucleotide-binding</keyword>
<keyword id="KW-0648">Protein biosynthesis</keyword>
<proteinExistence type="inferred from homology"/>
<name>SYP_BURP0</name>
<dbReference type="EC" id="6.1.1.15" evidence="1"/>
<dbReference type="EMBL" id="CP000572">
    <property type="protein sequence ID" value="ABN92483.1"/>
    <property type="molecule type" value="Genomic_DNA"/>
</dbReference>
<dbReference type="RefSeq" id="WP_004194217.1">
    <property type="nucleotide sequence ID" value="NC_009076.1"/>
</dbReference>
<dbReference type="SMR" id="A3NZI6"/>
<dbReference type="KEGG" id="bpl:BURPS1106A_3520"/>
<dbReference type="HOGENOM" id="CLU_016739_0_0_4"/>
<dbReference type="Proteomes" id="UP000006738">
    <property type="component" value="Chromosome I"/>
</dbReference>
<dbReference type="GO" id="GO:0005829">
    <property type="term" value="C:cytosol"/>
    <property type="evidence" value="ECO:0007669"/>
    <property type="project" value="TreeGrafter"/>
</dbReference>
<dbReference type="GO" id="GO:0002161">
    <property type="term" value="F:aminoacyl-tRNA deacylase activity"/>
    <property type="evidence" value="ECO:0007669"/>
    <property type="project" value="InterPro"/>
</dbReference>
<dbReference type="GO" id="GO:0005524">
    <property type="term" value="F:ATP binding"/>
    <property type="evidence" value="ECO:0007669"/>
    <property type="project" value="UniProtKB-UniRule"/>
</dbReference>
<dbReference type="GO" id="GO:0004827">
    <property type="term" value="F:proline-tRNA ligase activity"/>
    <property type="evidence" value="ECO:0007669"/>
    <property type="project" value="UniProtKB-UniRule"/>
</dbReference>
<dbReference type="GO" id="GO:0006433">
    <property type="term" value="P:prolyl-tRNA aminoacylation"/>
    <property type="evidence" value="ECO:0007669"/>
    <property type="project" value="UniProtKB-UniRule"/>
</dbReference>
<dbReference type="CDD" id="cd04334">
    <property type="entry name" value="ProRS-INS"/>
    <property type="match status" value="1"/>
</dbReference>
<dbReference type="CDD" id="cd00861">
    <property type="entry name" value="ProRS_anticodon_short"/>
    <property type="match status" value="1"/>
</dbReference>
<dbReference type="CDD" id="cd00779">
    <property type="entry name" value="ProRS_core_prok"/>
    <property type="match status" value="1"/>
</dbReference>
<dbReference type="FunFam" id="3.30.930.10:FF:000043">
    <property type="entry name" value="Proline--tRNA ligase"/>
    <property type="match status" value="1"/>
</dbReference>
<dbReference type="FunFam" id="3.30.930.10:FF:000097">
    <property type="entry name" value="Proline--tRNA ligase"/>
    <property type="match status" value="1"/>
</dbReference>
<dbReference type="Gene3D" id="3.40.50.800">
    <property type="entry name" value="Anticodon-binding domain"/>
    <property type="match status" value="1"/>
</dbReference>
<dbReference type="Gene3D" id="3.30.930.10">
    <property type="entry name" value="Bira Bifunctional Protein, Domain 2"/>
    <property type="match status" value="2"/>
</dbReference>
<dbReference type="Gene3D" id="3.90.960.10">
    <property type="entry name" value="YbaK/aminoacyl-tRNA synthetase-associated domain"/>
    <property type="match status" value="1"/>
</dbReference>
<dbReference type="HAMAP" id="MF_01569">
    <property type="entry name" value="Pro_tRNA_synth_type1"/>
    <property type="match status" value="1"/>
</dbReference>
<dbReference type="InterPro" id="IPR002314">
    <property type="entry name" value="aa-tRNA-synt_IIb"/>
</dbReference>
<dbReference type="InterPro" id="IPR006195">
    <property type="entry name" value="aa-tRNA-synth_II"/>
</dbReference>
<dbReference type="InterPro" id="IPR045864">
    <property type="entry name" value="aa-tRNA-synth_II/BPL/LPL"/>
</dbReference>
<dbReference type="InterPro" id="IPR004154">
    <property type="entry name" value="Anticodon-bd"/>
</dbReference>
<dbReference type="InterPro" id="IPR036621">
    <property type="entry name" value="Anticodon-bd_dom_sf"/>
</dbReference>
<dbReference type="InterPro" id="IPR002316">
    <property type="entry name" value="Pro-tRNA-ligase_IIa"/>
</dbReference>
<dbReference type="InterPro" id="IPR004500">
    <property type="entry name" value="Pro-tRNA-synth_IIa_bac-type"/>
</dbReference>
<dbReference type="InterPro" id="IPR023717">
    <property type="entry name" value="Pro-tRNA-Synthase_IIa_type1"/>
</dbReference>
<dbReference type="InterPro" id="IPR050062">
    <property type="entry name" value="Pro-tRNA_synthetase"/>
</dbReference>
<dbReference type="InterPro" id="IPR044140">
    <property type="entry name" value="ProRS_anticodon_short"/>
</dbReference>
<dbReference type="InterPro" id="IPR033730">
    <property type="entry name" value="ProRS_core_prok"/>
</dbReference>
<dbReference type="InterPro" id="IPR036754">
    <property type="entry name" value="YbaK/aa-tRNA-synt-asso_dom_sf"/>
</dbReference>
<dbReference type="InterPro" id="IPR007214">
    <property type="entry name" value="YbaK/aa-tRNA-synth-assoc-dom"/>
</dbReference>
<dbReference type="NCBIfam" id="NF006625">
    <property type="entry name" value="PRK09194.1"/>
    <property type="match status" value="1"/>
</dbReference>
<dbReference type="NCBIfam" id="TIGR00409">
    <property type="entry name" value="proS_fam_II"/>
    <property type="match status" value="1"/>
</dbReference>
<dbReference type="PANTHER" id="PTHR42753">
    <property type="entry name" value="MITOCHONDRIAL RIBOSOME PROTEIN L39/PROLYL-TRNA LIGASE FAMILY MEMBER"/>
    <property type="match status" value="1"/>
</dbReference>
<dbReference type="PANTHER" id="PTHR42753:SF2">
    <property type="entry name" value="PROLINE--TRNA LIGASE"/>
    <property type="match status" value="1"/>
</dbReference>
<dbReference type="Pfam" id="PF03129">
    <property type="entry name" value="HGTP_anticodon"/>
    <property type="match status" value="1"/>
</dbReference>
<dbReference type="Pfam" id="PF00587">
    <property type="entry name" value="tRNA-synt_2b"/>
    <property type="match status" value="1"/>
</dbReference>
<dbReference type="Pfam" id="PF04073">
    <property type="entry name" value="tRNA_edit"/>
    <property type="match status" value="1"/>
</dbReference>
<dbReference type="PIRSF" id="PIRSF001535">
    <property type="entry name" value="ProRS_1"/>
    <property type="match status" value="1"/>
</dbReference>
<dbReference type="PRINTS" id="PR01046">
    <property type="entry name" value="TRNASYNTHPRO"/>
</dbReference>
<dbReference type="SUPFAM" id="SSF52954">
    <property type="entry name" value="Class II aaRS ABD-related"/>
    <property type="match status" value="1"/>
</dbReference>
<dbReference type="SUPFAM" id="SSF55681">
    <property type="entry name" value="Class II aaRS and biotin synthetases"/>
    <property type="match status" value="1"/>
</dbReference>
<dbReference type="SUPFAM" id="SSF55826">
    <property type="entry name" value="YbaK/ProRS associated domain"/>
    <property type="match status" value="1"/>
</dbReference>
<dbReference type="PROSITE" id="PS50862">
    <property type="entry name" value="AA_TRNA_LIGASE_II"/>
    <property type="match status" value="1"/>
</dbReference>
<reference key="1">
    <citation type="journal article" date="2010" name="Genome Biol. Evol.">
        <title>Continuing evolution of Burkholderia mallei through genome reduction and large-scale rearrangements.</title>
        <authorList>
            <person name="Losada L."/>
            <person name="Ronning C.M."/>
            <person name="DeShazer D."/>
            <person name="Woods D."/>
            <person name="Fedorova N."/>
            <person name="Kim H.S."/>
            <person name="Shabalina S.A."/>
            <person name="Pearson T.R."/>
            <person name="Brinkac L."/>
            <person name="Tan P."/>
            <person name="Nandi T."/>
            <person name="Crabtree J."/>
            <person name="Badger J."/>
            <person name="Beckstrom-Sternberg S."/>
            <person name="Saqib M."/>
            <person name="Schutzer S.E."/>
            <person name="Keim P."/>
            <person name="Nierman W.C."/>
        </authorList>
    </citation>
    <scope>NUCLEOTIDE SEQUENCE [LARGE SCALE GENOMIC DNA]</scope>
    <source>
        <strain>1106a</strain>
    </source>
</reference>
<sequence>MKASRFFIGTLKEAPADAEIVSHKLMVRAGMIRRVAGGIYNYLPVGLRSIRKVEAIVREEMNRAGAIELLMPAVQPAELWQESGRWEQYGPELLRFKDRKQNEFVIGPTHEEVVTDIARNQIKSYRQMPVNFYQIQTKFRDEIRPRFGVMRGREFIMKDAYSFDKDHESLKESYKKMYDAYVRIFTRIGLEFRPVAADNGSIGGSGSHEFHVIADTGEDAIAYCPTSDFAANVEAAEALPLLASRAAPAEAMQKVATPGKAKCEAVAELMGIPLERTIKSIVLATDNEGAEPTIWLLMLRGDHDLNEIKTAKLPGLAGHRFATEAEIVEWFGTPPGYLGPIGTKKPVRVVADRTVANMSDFVVGANEVDYHIAGVNWGRDLPEPVVADIRNVKAGDPSPDGKGALDICRGIEVGHVFQLGTKYSDAMGATFIDESGKAQPMVMGCYGIGITRILGAAIEQNFDDKGIVWPEAIAPFEVVLCPMGYDRSDAVREAADKLYADLAAAGIDVILDDRGERPGVMFADWELIGVPHRLVIGERGLKDGKIEYQGRRDAEATLLPADSAAAAVAEKVRAALAR</sequence>
<evidence type="ECO:0000255" key="1">
    <source>
        <dbReference type="HAMAP-Rule" id="MF_01569"/>
    </source>
</evidence>
<gene>
    <name evidence="1" type="primary">proS</name>
    <name type="ordered locus">BURPS1106A_3520</name>
</gene>
<feature type="chain" id="PRO_1000069125" description="Proline--tRNA ligase">
    <location>
        <begin position="1"/>
        <end position="578"/>
    </location>
</feature>
<comment type="function">
    <text evidence="1">Catalyzes the attachment of proline to tRNA(Pro) in a two-step reaction: proline is first activated by ATP to form Pro-AMP and then transferred to the acceptor end of tRNA(Pro). As ProRS can inadvertently accommodate and process non-cognate amino acids such as alanine and cysteine, to avoid such errors it has two additional distinct editing activities against alanine. One activity is designated as 'pretransfer' editing and involves the tRNA(Pro)-independent hydrolysis of activated Ala-AMP. The other activity is designated 'posttransfer' editing and involves deacylation of mischarged Ala-tRNA(Pro). The misacylated Cys-tRNA(Pro) is not edited by ProRS.</text>
</comment>
<comment type="catalytic activity">
    <reaction evidence="1">
        <text>tRNA(Pro) + L-proline + ATP = L-prolyl-tRNA(Pro) + AMP + diphosphate</text>
        <dbReference type="Rhea" id="RHEA:14305"/>
        <dbReference type="Rhea" id="RHEA-COMP:9700"/>
        <dbReference type="Rhea" id="RHEA-COMP:9702"/>
        <dbReference type="ChEBI" id="CHEBI:30616"/>
        <dbReference type="ChEBI" id="CHEBI:33019"/>
        <dbReference type="ChEBI" id="CHEBI:60039"/>
        <dbReference type="ChEBI" id="CHEBI:78442"/>
        <dbReference type="ChEBI" id="CHEBI:78532"/>
        <dbReference type="ChEBI" id="CHEBI:456215"/>
        <dbReference type="EC" id="6.1.1.15"/>
    </reaction>
</comment>
<comment type="subunit">
    <text evidence="1">Homodimer.</text>
</comment>
<comment type="subcellular location">
    <subcellularLocation>
        <location evidence="1">Cytoplasm</location>
    </subcellularLocation>
</comment>
<comment type="domain">
    <text evidence="1">Consists of three domains: the N-terminal catalytic domain, the editing domain and the C-terminal anticodon-binding domain.</text>
</comment>
<comment type="similarity">
    <text evidence="1">Belongs to the class-II aminoacyl-tRNA synthetase family. ProS type 1 subfamily.</text>
</comment>
<accession>A3NZI6</accession>
<organism>
    <name type="scientific">Burkholderia pseudomallei (strain 1106a)</name>
    <dbReference type="NCBI Taxonomy" id="357348"/>
    <lineage>
        <taxon>Bacteria</taxon>
        <taxon>Pseudomonadati</taxon>
        <taxon>Pseudomonadota</taxon>
        <taxon>Betaproteobacteria</taxon>
        <taxon>Burkholderiales</taxon>
        <taxon>Burkholderiaceae</taxon>
        <taxon>Burkholderia</taxon>
        <taxon>pseudomallei group</taxon>
    </lineage>
</organism>
<protein>
    <recommendedName>
        <fullName evidence="1">Proline--tRNA ligase</fullName>
        <ecNumber evidence="1">6.1.1.15</ecNumber>
    </recommendedName>
    <alternativeName>
        <fullName evidence="1">Prolyl-tRNA synthetase</fullName>
        <shortName evidence="1">ProRS</shortName>
    </alternativeName>
</protein>